<organism>
    <name type="scientific">Leuconostoc mesenteroides subsp. mesenteroides (strain ATCC 8293 / DSM 20343 / BCRC 11652 / CCM 1803 / JCM 6124 / NCDO 523 / NBRC 100496 / NCIMB 8023 / NCTC 12954 / NRRL B-1118 / 37Y)</name>
    <dbReference type="NCBI Taxonomy" id="203120"/>
    <lineage>
        <taxon>Bacteria</taxon>
        <taxon>Bacillati</taxon>
        <taxon>Bacillota</taxon>
        <taxon>Bacilli</taxon>
        <taxon>Lactobacillales</taxon>
        <taxon>Lactobacillaceae</taxon>
        <taxon>Leuconostoc</taxon>
    </lineage>
</organism>
<sequence length="168" mass="17529">MVEFVNPKSLGELEENVVAINRVTKVVKGGRRLRFAALVVVGDKQGHVGFGTGKAQEVPEAIRKAIEDAKRKLITVPTVSTTIPHDVLGEWGGGKILVKPAEEGSGVAAGGAARSVMELAGIADVTAKSLGSATPINVIRATFDALTSLKDAEEVAKLRGVSLEHLAE</sequence>
<accession>Q03ZM9</accession>
<evidence type="ECO:0000255" key="1">
    <source>
        <dbReference type="HAMAP-Rule" id="MF_01307"/>
    </source>
</evidence>
<evidence type="ECO:0000305" key="2"/>
<name>RS5_LEUMM</name>
<reference key="1">
    <citation type="journal article" date="2006" name="Proc. Natl. Acad. Sci. U.S.A.">
        <title>Comparative genomics of the lactic acid bacteria.</title>
        <authorList>
            <person name="Makarova K.S."/>
            <person name="Slesarev A."/>
            <person name="Wolf Y.I."/>
            <person name="Sorokin A."/>
            <person name="Mirkin B."/>
            <person name="Koonin E.V."/>
            <person name="Pavlov A."/>
            <person name="Pavlova N."/>
            <person name="Karamychev V."/>
            <person name="Polouchine N."/>
            <person name="Shakhova V."/>
            <person name="Grigoriev I."/>
            <person name="Lou Y."/>
            <person name="Rohksar D."/>
            <person name="Lucas S."/>
            <person name="Huang K."/>
            <person name="Goodstein D.M."/>
            <person name="Hawkins T."/>
            <person name="Plengvidhya V."/>
            <person name="Welker D."/>
            <person name="Hughes J."/>
            <person name="Goh Y."/>
            <person name="Benson A."/>
            <person name="Baldwin K."/>
            <person name="Lee J.-H."/>
            <person name="Diaz-Muniz I."/>
            <person name="Dosti B."/>
            <person name="Smeianov V."/>
            <person name="Wechter W."/>
            <person name="Barabote R."/>
            <person name="Lorca G."/>
            <person name="Altermann E."/>
            <person name="Barrangou R."/>
            <person name="Ganesan B."/>
            <person name="Xie Y."/>
            <person name="Rawsthorne H."/>
            <person name="Tamir D."/>
            <person name="Parker C."/>
            <person name="Breidt F."/>
            <person name="Broadbent J.R."/>
            <person name="Hutkins R."/>
            <person name="O'Sullivan D."/>
            <person name="Steele J."/>
            <person name="Unlu G."/>
            <person name="Saier M.H. Jr."/>
            <person name="Klaenhammer T."/>
            <person name="Richardson P."/>
            <person name="Kozyavkin S."/>
            <person name="Weimer B.C."/>
            <person name="Mills D.A."/>
        </authorList>
    </citation>
    <scope>NUCLEOTIDE SEQUENCE [LARGE SCALE GENOMIC DNA]</scope>
    <source>
        <strain>ATCC 8293 / DSM 20343 / BCRC 11652 / CCM 1803 / JCM 6124 / NCDO 523 / NBRC 100496 / NCIMB 8023 / NCTC 12954 / NRRL B-1118 / 37Y</strain>
    </source>
</reference>
<dbReference type="EMBL" id="CP000414">
    <property type="protein sequence ID" value="ABJ61343.1"/>
    <property type="molecule type" value="Genomic_DNA"/>
</dbReference>
<dbReference type="RefSeq" id="WP_002816020.1">
    <property type="nucleotide sequence ID" value="NC_008531.1"/>
</dbReference>
<dbReference type="SMR" id="Q03ZM9"/>
<dbReference type="EnsemblBacteria" id="ABJ61343">
    <property type="protein sequence ID" value="ABJ61343"/>
    <property type="gene ID" value="LEUM_0212"/>
</dbReference>
<dbReference type="GeneID" id="97504965"/>
<dbReference type="KEGG" id="lme:LEUM_0212"/>
<dbReference type="eggNOG" id="COG0098">
    <property type="taxonomic scope" value="Bacteria"/>
</dbReference>
<dbReference type="HOGENOM" id="CLU_065898_2_2_9"/>
<dbReference type="Proteomes" id="UP000000362">
    <property type="component" value="Chromosome"/>
</dbReference>
<dbReference type="GO" id="GO:0015935">
    <property type="term" value="C:small ribosomal subunit"/>
    <property type="evidence" value="ECO:0007669"/>
    <property type="project" value="InterPro"/>
</dbReference>
<dbReference type="GO" id="GO:0019843">
    <property type="term" value="F:rRNA binding"/>
    <property type="evidence" value="ECO:0007669"/>
    <property type="project" value="UniProtKB-UniRule"/>
</dbReference>
<dbReference type="GO" id="GO:0003735">
    <property type="term" value="F:structural constituent of ribosome"/>
    <property type="evidence" value="ECO:0007669"/>
    <property type="project" value="InterPro"/>
</dbReference>
<dbReference type="GO" id="GO:0006412">
    <property type="term" value="P:translation"/>
    <property type="evidence" value="ECO:0007669"/>
    <property type="project" value="UniProtKB-UniRule"/>
</dbReference>
<dbReference type="FunFam" id="3.30.160.20:FF:000001">
    <property type="entry name" value="30S ribosomal protein S5"/>
    <property type="match status" value="1"/>
</dbReference>
<dbReference type="FunFam" id="3.30.230.10:FF:000002">
    <property type="entry name" value="30S ribosomal protein S5"/>
    <property type="match status" value="1"/>
</dbReference>
<dbReference type="Gene3D" id="3.30.160.20">
    <property type="match status" value="1"/>
</dbReference>
<dbReference type="Gene3D" id="3.30.230.10">
    <property type="match status" value="1"/>
</dbReference>
<dbReference type="HAMAP" id="MF_01307_B">
    <property type="entry name" value="Ribosomal_uS5_B"/>
    <property type="match status" value="1"/>
</dbReference>
<dbReference type="InterPro" id="IPR020568">
    <property type="entry name" value="Ribosomal_Su5_D2-typ_SF"/>
</dbReference>
<dbReference type="InterPro" id="IPR000851">
    <property type="entry name" value="Ribosomal_uS5"/>
</dbReference>
<dbReference type="InterPro" id="IPR005712">
    <property type="entry name" value="Ribosomal_uS5_bac-type"/>
</dbReference>
<dbReference type="InterPro" id="IPR005324">
    <property type="entry name" value="Ribosomal_uS5_C"/>
</dbReference>
<dbReference type="InterPro" id="IPR013810">
    <property type="entry name" value="Ribosomal_uS5_N"/>
</dbReference>
<dbReference type="InterPro" id="IPR018192">
    <property type="entry name" value="Ribosomal_uS5_N_CS"/>
</dbReference>
<dbReference type="InterPro" id="IPR014721">
    <property type="entry name" value="Ribsml_uS5_D2-typ_fold_subgr"/>
</dbReference>
<dbReference type="NCBIfam" id="TIGR01021">
    <property type="entry name" value="rpsE_bact"/>
    <property type="match status" value="1"/>
</dbReference>
<dbReference type="PANTHER" id="PTHR48277">
    <property type="entry name" value="MITOCHONDRIAL RIBOSOMAL PROTEIN S5"/>
    <property type="match status" value="1"/>
</dbReference>
<dbReference type="PANTHER" id="PTHR48277:SF1">
    <property type="entry name" value="MITOCHONDRIAL RIBOSOMAL PROTEIN S5"/>
    <property type="match status" value="1"/>
</dbReference>
<dbReference type="Pfam" id="PF00333">
    <property type="entry name" value="Ribosomal_S5"/>
    <property type="match status" value="1"/>
</dbReference>
<dbReference type="Pfam" id="PF03719">
    <property type="entry name" value="Ribosomal_S5_C"/>
    <property type="match status" value="1"/>
</dbReference>
<dbReference type="SUPFAM" id="SSF54768">
    <property type="entry name" value="dsRNA-binding domain-like"/>
    <property type="match status" value="1"/>
</dbReference>
<dbReference type="SUPFAM" id="SSF54211">
    <property type="entry name" value="Ribosomal protein S5 domain 2-like"/>
    <property type="match status" value="1"/>
</dbReference>
<dbReference type="PROSITE" id="PS00585">
    <property type="entry name" value="RIBOSOMAL_S5"/>
    <property type="match status" value="1"/>
</dbReference>
<dbReference type="PROSITE" id="PS50881">
    <property type="entry name" value="S5_DSRBD"/>
    <property type="match status" value="1"/>
</dbReference>
<gene>
    <name evidence="1" type="primary">rpsE</name>
    <name type="ordered locus">LEUM_0212</name>
</gene>
<feature type="chain" id="PRO_0000323151" description="Small ribosomal subunit protein uS5">
    <location>
        <begin position="1"/>
        <end position="168"/>
    </location>
</feature>
<feature type="domain" description="S5 DRBM" evidence="1">
    <location>
        <begin position="13"/>
        <end position="76"/>
    </location>
</feature>
<keyword id="KW-1185">Reference proteome</keyword>
<keyword id="KW-0687">Ribonucleoprotein</keyword>
<keyword id="KW-0689">Ribosomal protein</keyword>
<keyword id="KW-0694">RNA-binding</keyword>
<keyword id="KW-0699">rRNA-binding</keyword>
<protein>
    <recommendedName>
        <fullName evidence="1">Small ribosomal subunit protein uS5</fullName>
    </recommendedName>
    <alternativeName>
        <fullName evidence="2">30S ribosomal protein S5</fullName>
    </alternativeName>
</protein>
<proteinExistence type="inferred from homology"/>
<comment type="function">
    <text evidence="1">With S4 and S12 plays an important role in translational accuracy.</text>
</comment>
<comment type="function">
    <text evidence="1">Located at the back of the 30S subunit body where it stabilizes the conformation of the head with respect to the body.</text>
</comment>
<comment type="subunit">
    <text evidence="1">Part of the 30S ribosomal subunit. Contacts proteins S4 and S8.</text>
</comment>
<comment type="domain">
    <text>The N-terminal domain interacts with the head of the 30S subunit; the C-terminal domain interacts with the body and contacts protein S4. The interaction surface between S4 and S5 is involved in control of translational fidelity.</text>
</comment>
<comment type="similarity">
    <text evidence="1">Belongs to the universal ribosomal protein uS5 family.</text>
</comment>